<name>CYSC_SHEPA</name>
<proteinExistence type="inferred from homology"/>
<gene>
    <name evidence="1" type="primary">cysC</name>
    <name type="ordered locus">Spea_0666</name>
</gene>
<sequence>MSDIVWHQHSIDKQSRADQKGQNPILLWFTGLSGSGKSTLAGALERALFDAGFHTYLLDGDNVRHGLCKDLGFSADDRDENLRRVGEVAKLMVDAGLVVLSAFISPTREERERVRALFDQGQFIEVHVSTPIEVCEARDPKGLYSKARAGEIKNFTGISAPYETPTAAELTIDTSKGDLATQVSALLDYLAAIQVIDSEKLKKAV</sequence>
<dbReference type="EC" id="2.7.1.25" evidence="1"/>
<dbReference type="EMBL" id="CP000851">
    <property type="protein sequence ID" value="ABV85993.1"/>
    <property type="molecule type" value="Genomic_DNA"/>
</dbReference>
<dbReference type="RefSeq" id="WP_012153931.1">
    <property type="nucleotide sequence ID" value="NC_009901.1"/>
</dbReference>
<dbReference type="SMR" id="A8H0A6"/>
<dbReference type="STRING" id="398579.Spea_0666"/>
<dbReference type="KEGG" id="spl:Spea_0666"/>
<dbReference type="eggNOG" id="COG0529">
    <property type="taxonomic scope" value="Bacteria"/>
</dbReference>
<dbReference type="HOGENOM" id="CLU_046932_1_0_6"/>
<dbReference type="OrthoDB" id="9804504at2"/>
<dbReference type="UniPathway" id="UPA00140">
    <property type="reaction ID" value="UER00205"/>
</dbReference>
<dbReference type="Proteomes" id="UP000002608">
    <property type="component" value="Chromosome"/>
</dbReference>
<dbReference type="GO" id="GO:0004020">
    <property type="term" value="F:adenylylsulfate kinase activity"/>
    <property type="evidence" value="ECO:0007669"/>
    <property type="project" value="UniProtKB-UniRule"/>
</dbReference>
<dbReference type="GO" id="GO:0005524">
    <property type="term" value="F:ATP binding"/>
    <property type="evidence" value="ECO:0007669"/>
    <property type="project" value="UniProtKB-UniRule"/>
</dbReference>
<dbReference type="GO" id="GO:0070814">
    <property type="term" value="P:hydrogen sulfide biosynthetic process"/>
    <property type="evidence" value="ECO:0007669"/>
    <property type="project" value="UniProtKB-UniRule"/>
</dbReference>
<dbReference type="GO" id="GO:0000103">
    <property type="term" value="P:sulfate assimilation"/>
    <property type="evidence" value="ECO:0007669"/>
    <property type="project" value="UniProtKB-UniRule"/>
</dbReference>
<dbReference type="CDD" id="cd02027">
    <property type="entry name" value="APSK"/>
    <property type="match status" value="1"/>
</dbReference>
<dbReference type="FunFam" id="3.40.50.300:FF:000212">
    <property type="entry name" value="Adenylyl-sulfate kinase"/>
    <property type="match status" value="1"/>
</dbReference>
<dbReference type="Gene3D" id="3.40.50.300">
    <property type="entry name" value="P-loop containing nucleotide triphosphate hydrolases"/>
    <property type="match status" value="1"/>
</dbReference>
<dbReference type="HAMAP" id="MF_00065">
    <property type="entry name" value="Adenylyl_sulf_kinase"/>
    <property type="match status" value="1"/>
</dbReference>
<dbReference type="InterPro" id="IPR002891">
    <property type="entry name" value="APS_kinase"/>
</dbReference>
<dbReference type="InterPro" id="IPR027417">
    <property type="entry name" value="P-loop_NTPase"/>
</dbReference>
<dbReference type="NCBIfam" id="TIGR00455">
    <property type="entry name" value="apsK"/>
    <property type="match status" value="1"/>
</dbReference>
<dbReference type="NCBIfam" id="NF003013">
    <property type="entry name" value="PRK03846.1"/>
    <property type="match status" value="1"/>
</dbReference>
<dbReference type="PANTHER" id="PTHR11055:SF63">
    <property type="entry name" value="ADENYLYL-SULFATE KINASE 1, CHLOROPLASTIC"/>
    <property type="match status" value="1"/>
</dbReference>
<dbReference type="PANTHER" id="PTHR11055">
    <property type="entry name" value="BIFUNCTIONAL 3'-PHOSPHOADENOSINE 5'-PHOSPHOSULFATE SYNTHASE"/>
    <property type="match status" value="1"/>
</dbReference>
<dbReference type="Pfam" id="PF01583">
    <property type="entry name" value="APS_kinase"/>
    <property type="match status" value="1"/>
</dbReference>
<dbReference type="SUPFAM" id="SSF52540">
    <property type="entry name" value="P-loop containing nucleoside triphosphate hydrolases"/>
    <property type="match status" value="1"/>
</dbReference>
<accession>A8H0A6</accession>
<comment type="function">
    <text evidence="1">Catalyzes the synthesis of activated sulfate.</text>
</comment>
<comment type="catalytic activity">
    <reaction evidence="1">
        <text>adenosine 5'-phosphosulfate + ATP = 3'-phosphoadenylyl sulfate + ADP + H(+)</text>
        <dbReference type="Rhea" id="RHEA:24152"/>
        <dbReference type="ChEBI" id="CHEBI:15378"/>
        <dbReference type="ChEBI" id="CHEBI:30616"/>
        <dbReference type="ChEBI" id="CHEBI:58243"/>
        <dbReference type="ChEBI" id="CHEBI:58339"/>
        <dbReference type="ChEBI" id="CHEBI:456216"/>
        <dbReference type="EC" id="2.7.1.25"/>
    </reaction>
</comment>
<comment type="pathway">
    <text evidence="1">Sulfur metabolism; hydrogen sulfide biosynthesis; sulfite from sulfate: step 2/3.</text>
</comment>
<comment type="similarity">
    <text evidence="1">Belongs to the APS kinase family.</text>
</comment>
<organism>
    <name type="scientific">Shewanella pealeana (strain ATCC 700345 / ANG-SQ1)</name>
    <dbReference type="NCBI Taxonomy" id="398579"/>
    <lineage>
        <taxon>Bacteria</taxon>
        <taxon>Pseudomonadati</taxon>
        <taxon>Pseudomonadota</taxon>
        <taxon>Gammaproteobacteria</taxon>
        <taxon>Alteromonadales</taxon>
        <taxon>Shewanellaceae</taxon>
        <taxon>Shewanella</taxon>
    </lineage>
</organism>
<feature type="chain" id="PRO_1000075091" description="Adenylyl-sulfate kinase">
    <location>
        <begin position="1"/>
        <end position="205"/>
    </location>
</feature>
<feature type="active site" description="Phosphoserine intermediate" evidence="1">
    <location>
        <position position="105"/>
    </location>
</feature>
<feature type="binding site" evidence="1">
    <location>
        <begin position="31"/>
        <end position="38"/>
    </location>
    <ligand>
        <name>ATP</name>
        <dbReference type="ChEBI" id="CHEBI:30616"/>
    </ligand>
</feature>
<reference key="1">
    <citation type="submission" date="2007-10" db="EMBL/GenBank/DDBJ databases">
        <title>Complete sequence of Shewanella pealeana ATCC 700345.</title>
        <authorList>
            <consortium name="US DOE Joint Genome Institute"/>
            <person name="Copeland A."/>
            <person name="Lucas S."/>
            <person name="Lapidus A."/>
            <person name="Barry K."/>
            <person name="Glavina del Rio T."/>
            <person name="Dalin E."/>
            <person name="Tice H."/>
            <person name="Pitluck S."/>
            <person name="Chertkov O."/>
            <person name="Brettin T."/>
            <person name="Bruce D."/>
            <person name="Detter J.C."/>
            <person name="Han C."/>
            <person name="Schmutz J."/>
            <person name="Larimer F."/>
            <person name="Land M."/>
            <person name="Hauser L."/>
            <person name="Kyrpides N."/>
            <person name="Kim E."/>
            <person name="Zhao J.-S.Z."/>
            <person name="Manno D."/>
            <person name="Hawari J."/>
            <person name="Richardson P."/>
        </authorList>
    </citation>
    <scope>NUCLEOTIDE SEQUENCE [LARGE SCALE GENOMIC DNA]</scope>
    <source>
        <strain>ATCC 700345 / ANG-SQ1</strain>
    </source>
</reference>
<protein>
    <recommendedName>
        <fullName evidence="1">Adenylyl-sulfate kinase</fullName>
        <ecNumber evidence="1">2.7.1.25</ecNumber>
    </recommendedName>
    <alternativeName>
        <fullName evidence="1">APS kinase</fullName>
    </alternativeName>
    <alternativeName>
        <fullName evidence="1">ATP adenosine-5'-phosphosulfate 3'-phosphotransferase</fullName>
    </alternativeName>
    <alternativeName>
        <fullName evidence="1">Adenosine-5'-phosphosulfate kinase</fullName>
    </alternativeName>
</protein>
<evidence type="ECO:0000255" key="1">
    <source>
        <dbReference type="HAMAP-Rule" id="MF_00065"/>
    </source>
</evidence>
<keyword id="KW-0067">ATP-binding</keyword>
<keyword id="KW-0418">Kinase</keyword>
<keyword id="KW-0547">Nucleotide-binding</keyword>
<keyword id="KW-0597">Phosphoprotein</keyword>
<keyword id="KW-1185">Reference proteome</keyword>
<keyword id="KW-0808">Transferase</keyword>